<organism>
    <name type="scientific">Homo sapiens</name>
    <name type="common">Human</name>
    <dbReference type="NCBI Taxonomy" id="9606"/>
    <lineage>
        <taxon>Eukaryota</taxon>
        <taxon>Metazoa</taxon>
        <taxon>Chordata</taxon>
        <taxon>Craniata</taxon>
        <taxon>Vertebrata</taxon>
        <taxon>Euteleostomi</taxon>
        <taxon>Mammalia</taxon>
        <taxon>Eutheria</taxon>
        <taxon>Euarchontoglires</taxon>
        <taxon>Primates</taxon>
        <taxon>Haplorrhini</taxon>
        <taxon>Catarrhini</taxon>
        <taxon>Hominidae</taxon>
        <taxon>Homo</taxon>
    </lineage>
</organism>
<evidence type="ECO:0000250" key="1">
    <source>
        <dbReference type="UniProtKB" id="O14925"/>
    </source>
</evidence>
<evidence type="ECO:0000255" key="2"/>
<evidence type="ECO:0000305" key="3"/>
<evidence type="ECO:0000312" key="4">
    <source>
        <dbReference type="HGNC" id="HGNC:23581"/>
    </source>
</evidence>
<protein>
    <recommendedName>
        <fullName evidence="3">Mitochondrial import inner membrane translocase subunit Tim23B</fullName>
        <shortName evidence="3">TIMM23B</shortName>
    </recommendedName>
</protein>
<proteinExistence type="evidence at protein level"/>
<accession>Q5SRD1</accession>
<accession>B4DDK6</accession>
<accession>E7EP42</accession>
<accession>Q5SRD2</accession>
<gene>
    <name evidence="4" type="primary">TIMM23B</name>
</gene>
<comment type="function">
    <text evidence="1">May participate in the translocation of transit peptide-containing proteins across the mitochondrial inner membrane. the PAM complex (By similarity).</text>
</comment>
<comment type="subcellular location">
    <subcellularLocation>
        <location evidence="3">Mitochondrion inner membrane</location>
        <topology evidence="2">Multi-pass membrane protein</topology>
    </subcellularLocation>
</comment>
<comment type="alternative products">
    <event type="alternative splicing"/>
    <isoform>
        <id>Q5SRD1-1</id>
        <name>1</name>
        <sequence type="displayed"/>
    </isoform>
    <isoform>
        <id>Q5SRD1-2</id>
        <name>2</name>
        <sequence type="described" ref="VSP_060625"/>
    </isoform>
</comment>
<comment type="similarity">
    <text evidence="3">Belongs to the Tim17/Tim22/Tim23 family.</text>
</comment>
<reference key="1">
    <citation type="journal article" date="2004" name="Nature">
        <title>The DNA sequence and comparative analysis of human chromosome 10.</title>
        <authorList>
            <person name="Deloukas P."/>
            <person name="Earthrowl M.E."/>
            <person name="Grafham D.V."/>
            <person name="Rubenfield M."/>
            <person name="French L."/>
            <person name="Steward C.A."/>
            <person name="Sims S.K."/>
            <person name="Jones M.C."/>
            <person name="Searle S."/>
            <person name="Scott C."/>
            <person name="Howe K."/>
            <person name="Hunt S.E."/>
            <person name="Andrews T.D."/>
            <person name="Gilbert J.G.R."/>
            <person name="Swarbreck D."/>
            <person name="Ashurst J.L."/>
            <person name="Taylor A."/>
            <person name="Battles J."/>
            <person name="Bird C.P."/>
            <person name="Ainscough R."/>
            <person name="Almeida J.P."/>
            <person name="Ashwell R.I.S."/>
            <person name="Ambrose K.D."/>
            <person name="Babbage A.K."/>
            <person name="Bagguley C.L."/>
            <person name="Bailey J."/>
            <person name="Banerjee R."/>
            <person name="Bates K."/>
            <person name="Beasley H."/>
            <person name="Bray-Allen S."/>
            <person name="Brown A.J."/>
            <person name="Brown J.Y."/>
            <person name="Burford D.C."/>
            <person name="Burrill W."/>
            <person name="Burton J."/>
            <person name="Cahill P."/>
            <person name="Camire D."/>
            <person name="Carter N.P."/>
            <person name="Chapman J.C."/>
            <person name="Clark S.Y."/>
            <person name="Clarke G."/>
            <person name="Clee C.M."/>
            <person name="Clegg S."/>
            <person name="Corby N."/>
            <person name="Coulson A."/>
            <person name="Dhami P."/>
            <person name="Dutta I."/>
            <person name="Dunn M."/>
            <person name="Faulkner L."/>
            <person name="Frankish A."/>
            <person name="Frankland J.A."/>
            <person name="Garner P."/>
            <person name="Garnett J."/>
            <person name="Gribble S."/>
            <person name="Griffiths C."/>
            <person name="Grocock R."/>
            <person name="Gustafson E."/>
            <person name="Hammond S."/>
            <person name="Harley J.L."/>
            <person name="Hart E."/>
            <person name="Heath P.D."/>
            <person name="Ho T.P."/>
            <person name="Hopkins B."/>
            <person name="Horne J."/>
            <person name="Howden P.J."/>
            <person name="Huckle E."/>
            <person name="Hynds C."/>
            <person name="Johnson C."/>
            <person name="Johnson D."/>
            <person name="Kana A."/>
            <person name="Kay M."/>
            <person name="Kimberley A.M."/>
            <person name="Kershaw J.K."/>
            <person name="Kokkinaki M."/>
            <person name="Laird G.K."/>
            <person name="Lawlor S."/>
            <person name="Lee H.M."/>
            <person name="Leongamornlert D.A."/>
            <person name="Laird G."/>
            <person name="Lloyd C."/>
            <person name="Lloyd D.M."/>
            <person name="Loveland J."/>
            <person name="Lovell J."/>
            <person name="McLaren S."/>
            <person name="McLay K.E."/>
            <person name="McMurray A."/>
            <person name="Mashreghi-Mohammadi M."/>
            <person name="Matthews L."/>
            <person name="Milne S."/>
            <person name="Nickerson T."/>
            <person name="Nguyen M."/>
            <person name="Overton-Larty E."/>
            <person name="Palmer S.A."/>
            <person name="Pearce A.V."/>
            <person name="Peck A.I."/>
            <person name="Pelan S."/>
            <person name="Phillimore B."/>
            <person name="Porter K."/>
            <person name="Rice C.M."/>
            <person name="Rogosin A."/>
            <person name="Ross M.T."/>
            <person name="Sarafidou T."/>
            <person name="Sehra H.K."/>
            <person name="Shownkeen R."/>
            <person name="Skuce C.D."/>
            <person name="Smith M."/>
            <person name="Standring L."/>
            <person name="Sycamore N."/>
            <person name="Tester J."/>
            <person name="Thorpe A."/>
            <person name="Torcasso W."/>
            <person name="Tracey A."/>
            <person name="Tromans A."/>
            <person name="Tsolas J."/>
            <person name="Wall M."/>
            <person name="Walsh J."/>
            <person name="Wang H."/>
            <person name="Weinstock K."/>
            <person name="West A.P."/>
            <person name="Willey D.L."/>
            <person name="Whitehead S.L."/>
            <person name="Wilming L."/>
            <person name="Wray P.W."/>
            <person name="Young L."/>
            <person name="Chen Y."/>
            <person name="Lovering R.C."/>
            <person name="Moschonas N.K."/>
            <person name="Siebert R."/>
            <person name="Fechtel K."/>
            <person name="Bentley D."/>
            <person name="Durbin R.M."/>
            <person name="Hubbard T."/>
            <person name="Doucette-Stamm L."/>
            <person name="Beck S."/>
            <person name="Smith D.R."/>
            <person name="Rogers J."/>
        </authorList>
    </citation>
    <scope>NUCLEOTIDE SEQUENCE [LARGE SCALE GENOMIC DNA]</scope>
</reference>
<reference key="2">
    <citation type="journal article" date="2004" name="Nat. Genet.">
        <title>Complete sequencing and characterization of 21,243 full-length human cDNAs.</title>
        <authorList>
            <person name="Ota T."/>
            <person name="Suzuki Y."/>
            <person name="Nishikawa T."/>
            <person name="Otsuki T."/>
            <person name="Sugiyama T."/>
            <person name="Irie R."/>
            <person name="Wakamatsu A."/>
            <person name="Hayashi K."/>
            <person name="Sato H."/>
            <person name="Nagai K."/>
            <person name="Kimura K."/>
            <person name="Makita H."/>
            <person name="Sekine M."/>
            <person name="Obayashi M."/>
            <person name="Nishi T."/>
            <person name="Shibahara T."/>
            <person name="Tanaka T."/>
            <person name="Ishii S."/>
            <person name="Yamamoto J."/>
            <person name="Saito K."/>
            <person name="Kawai Y."/>
            <person name="Isono Y."/>
            <person name="Nakamura Y."/>
            <person name="Nagahari K."/>
            <person name="Murakami K."/>
            <person name="Yasuda T."/>
            <person name="Iwayanagi T."/>
            <person name="Wagatsuma M."/>
            <person name="Shiratori A."/>
            <person name="Sudo H."/>
            <person name="Hosoiri T."/>
            <person name="Kaku Y."/>
            <person name="Kodaira H."/>
            <person name="Kondo H."/>
            <person name="Sugawara M."/>
            <person name="Takahashi M."/>
            <person name="Kanda K."/>
            <person name="Yokoi T."/>
            <person name="Furuya T."/>
            <person name="Kikkawa E."/>
            <person name="Omura Y."/>
            <person name="Abe K."/>
            <person name="Kamihara K."/>
            <person name="Katsuta N."/>
            <person name="Sato K."/>
            <person name="Tanikawa M."/>
            <person name="Yamazaki M."/>
            <person name="Ninomiya K."/>
            <person name="Ishibashi T."/>
            <person name="Yamashita H."/>
            <person name="Murakawa K."/>
            <person name="Fujimori K."/>
            <person name="Tanai H."/>
            <person name="Kimata M."/>
            <person name="Watanabe M."/>
            <person name="Hiraoka S."/>
            <person name="Chiba Y."/>
            <person name="Ishida S."/>
            <person name="Ono Y."/>
            <person name="Takiguchi S."/>
            <person name="Watanabe S."/>
            <person name="Yosida M."/>
            <person name="Hotuta T."/>
            <person name="Kusano J."/>
            <person name="Kanehori K."/>
            <person name="Takahashi-Fujii A."/>
            <person name="Hara H."/>
            <person name="Tanase T.-O."/>
            <person name="Nomura Y."/>
            <person name="Togiya S."/>
            <person name="Komai F."/>
            <person name="Hara R."/>
            <person name="Takeuchi K."/>
            <person name="Arita M."/>
            <person name="Imose N."/>
            <person name="Musashino K."/>
            <person name="Yuuki H."/>
            <person name="Oshima A."/>
            <person name="Sasaki N."/>
            <person name="Aotsuka S."/>
            <person name="Yoshikawa Y."/>
            <person name="Matsunawa H."/>
            <person name="Ichihara T."/>
            <person name="Shiohata N."/>
            <person name="Sano S."/>
            <person name="Moriya S."/>
            <person name="Momiyama H."/>
            <person name="Satoh N."/>
            <person name="Takami S."/>
            <person name="Terashima Y."/>
            <person name="Suzuki O."/>
            <person name="Nakagawa S."/>
            <person name="Senoh A."/>
            <person name="Mizoguchi H."/>
            <person name="Goto Y."/>
            <person name="Shimizu F."/>
            <person name="Wakebe H."/>
            <person name="Hishigaki H."/>
            <person name="Watanabe T."/>
            <person name="Sugiyama A."/>
            <person name="Takemoto M."/>
            <person name="Kawakami B."/>
            <person name="Yamazaki M."/>
            <person name="Watanabe K."/>
            <person name="Kumagai A."/>
            <person name="Itakura S."/>
            <person name="Fukuzumi Y."/>
            <person name="Fujimori Y."/>
            <person name="Komiyama M."/>
            <person name="Tashiro H."/>
            <person name="Tanigami A."/>
            <person name="Fujiwara T."/>
            <person name="Ono T."/>
            <person name="Yamada K."/>
            <person name="Fujii Y."/>
            <person name="Ozaki K."/>
            <person name="Hirao M."/>
            <person name="Ohmori Y."/>
            <person name="Kawabata A."/>
            <person name="Hikiji T."/>
            <person name="Kobatake N."/>
            <person name="Inagaki H."/>
            <person name="Ikema Y."/>
            <person name="Okamoto S."/>
            <person name="Okitani R."/>
            <person name="Kawakami T."/>
            <person name="Noguchi S."/>
            <person name="Itoh T."/>
            <person name="Shigeta K."/>
            <person name="Senba T."/>
            <person name="Matsumura K."/>
            <person name="Nakajima Y."/>
            <person name="Mizuno T."/>
            <person name="Morinaga M."/>
            <person name="Sasaki M."/>
            <person name="Togashi T."/>
            <person name="Oyama M."/>
            <person name="Hata H."/>
            <person name="Watanabe M."/>
            <person name="Komatsu T."/>
            <person name="Mizushima-Sugano J."/>
            <person name="Satoh T."/>
            <person name="Shirai Y."/>
            <person name="Takahashi Y."/>
            <person name="Nakagawa K."/>
            <person name="Okumura K."/>
            <person name="Nagase T."/>
            <person name="Nomura N."/>
            <person name="Kikuchi H."/>
            <person name="Masuho Y."/>
            <person name="Yamashita R."/>
            <person name="Nakai K."/>
            <person name="Yada T."/>
            <person name="Nakamura Y."/>
            <person name="Ohara O."/>
            <person name="Isogai T."/>
            <person name="Sugano S."/>
        </authorList>
    </citation>
    <scope>NUCLEOTIDE SEQUENCE [LARGE SCALE MRNA]</scope>
</reference>
<reference key="3">
    <citation type="journal article" date="2018" name="Biochim. Biophys. Acta">
        <title>Expression of the human TIMM23 and TIMM23B genes is regulated by the GABP transcription factor.</title>
        <authorList>
            <person name="Prieto-Ruiz J.A."/>
            <person name="Alis R."/>
            <person name="Garcia-Benlloch S."/>
            <person name="Saez-Atienzar S."/>
            <person name="Ventura I."/>
            <person name="Hernandez-Andreu J.M."/>
            <person name="Hernandez-Yago J."/>
            <person name="Blesa J.R."/>
        </authorList>
    </citation>
    <scope>CHARACTERIZATION</scope>
    <scope>ALTERNATIVE SPLICING</scope>
</reference>
<name>TI23B_HUMAN</name>
<sequence length="188" mass="19670">MEGGGGSGDKTTGVLAGFFGAGEAGYSHADLAGVPLTGMNPLCPYLNVDPRYLVQDTDEFILPTGANKTWGRFELAFFTIGGCCMTGAAFGAMNGLRLGLKETQNMAWSKPGNVQILNMVTRQGALWANTLGSLALLYSAFGVIIEKTRGAEDDLNTVAAGTMTGMLYKCTVSEMALDSPFCVLLSGS</sequence>
<dbReference type="EMBL" id="AL672187">
    <property type="status" value="NOT_ANNOTATED_CDS"/>
    <property type="molecule type" value="Genomic_DNA"/>
</dbReference>
<dbReference type="EMBL" id="AL442003">
    <property type="status" value="NOT_ANNOTATED_CDS"/>
    <property type="molecule type" value="Genomic_DNA"/>
</dbReference>
<dbReference type="EMBL" id="AK293228">
    <property type="protein sequence ID" value="BAG56767.1"/>
    <property type="molecule type" value="mRNA"/>
</dbReference>
<dbReference type="EMBL" id="FO393433">
    <property type="status" value="NOT_ANNOTATED_CDS"/>
    <property type="molecule type" value="Genomic_DNA"/>
</dbReference>
<dbReference type="EMBL" id="FP565721">
    <property type="status" value="NOT_ANNOTATED_CDS"/>
    <property type="molecule type" value="Genomic_DNA"/>
</dbReference>
<dbReference type="CCDS" id="CCDS73131.1">
    <molecule id="Q5SRD1-1"/>
</dbReference>
<dbReference type="CCDS" id="CCDS76301.1">
    <molecule id="Q5SRD1-2"/>
</dbReference>
<dbReference type="RefSeq" id="NP_001277046.1">
    <molecule id="Q5SRD1-1"/>
    <property type="nucleotide sequence ID" value="NM_001290117.2"/>
</dbReference>
<dbReference type="RefSeq" id="NP_001277047.1">
    <molecule id="Q5SRD1-2"/>
    <property type="nucleotide sequence ID" value="NM_001290118.2"/>
</dbReference>
<dbReference type="RefSeq" id="XP_016870949.1">
    <property type="nucleotide sequence ID" value="XM_017015460.1"/>
</dbReference>
<dbReference type="SMR" id="Q5SRD1"/>
<dbReference type="FunCoup" id="Q5SRD1">
    <property type="interactions" value="499"/>
</dbReference>
<dbReference type="IntAct" id="Q5SRD1">
    <property type="interactions" value="18"/>
</dbReference>
<dbReference type="MINT" id="Q5SRD1"/>
<dbReference type="iPTMnet" id="Q5SRD1"/>
<dbReference type="PhosphoSitePlus" id="Q5SRD1"/>
<dbReference type="SwissPalm" id="Q5SRD1"/>
<dbReference type="BioMuta" id="TIMM23B"/>
<dbReference type="jPOST" id="Q5SRD1"/>
<dbReference type="MassIVE" id="Q5SRD1"/>
<dbReference type="PeptideAtlas" id="Q5SRD1"/>
<dbReference type="ProteomicsDB" id="17280"/>
<dbReference type="ProteomicsDB" id="63842"/>
<dbReference type="Pumba" id="Q5SRD1"/>
<dbReference type="Antibodypedia" id="27714">
    <property type="antibodies" value="8 antibodies from 4 providers"/>
</dbReference>
<dbReference type="DNASU" id="100652748"/>
<dbReference type="Ensembl" id="ENST00000651259.3">
    <molecule id="Q5SRD1-1"/>
    <property type="protein sequence ID" value="ENSP00000502369.1"/>
    <property type="gene ID" value="ENSG00000204152.14"/>
</dbReference>
<dbReference type="Ensembl" id="ENST00000652716.1">
    <molecule id="Q5SRD1-2"/>
    <property type="protein sequence ID" value="ENSP00000502146.1"/>
    <property type="gene ID" value="ENSG00000204152.14"/>
</dbReference>
<dbReference type="GeneID" id="100652748"/>
<dbReference type="KEGG" id="hsa:100652748"/>
<dbReference type="MANE-Select" id="ENST00000651259.3">
    <property type="protein sequence ID" value="ENSP00000502369.1"/>
    <property type="RefSeq nucleotide sequence ID" value="NM_001290117.2"/>
    <property type="RefSeq protein sequence ID" value="NP_001277046.1"/>
</dbReference>
<dbReference type="UCSC" id="uc031wgt.2">
    <molecule id="Q5SRD1-1"/>
    <property type="organism name" value="human"/>
</dbReference>
<dbReference type="AGR" id="HGNC:23581"/>
<dbReference type="CTD" id="100652748"/>
<dbReference type="GeneCards" id="TIMM23B"/>
<dbReference type="HGNC" id="HGNC:23581">
    <property type="gene designation" value="TIMM23B"/>
</dbReference>
<dbReference type="HPA" id="ENSG00000204152">
    <property type="expression patterns" value="Low tissue specificity"/>
</dbReference>
<dbReference type="MIM" id="620758">
    <property type="type" value="gene"/>
</dbReference>
<dbReference type="neXtProt" id="NX_Q5SRD1"/>
<dbReference type="OpenTargets" id="ENSG00000178440"/>
<dbReference type="OpenTargets" id="ENSG00000204152"/>
<dbReference type="VEuPathDB" id="HostDB:ENSG00000204152"/>
<dbReference type="GeneTree" id="ENSGT00390000001094"/>
<dbReference type="HOGENOM" id="CLU_063935_2_0_1"/>
<dbReference type="InParanoid" id="Q5SRD1"/>
<dbReference type="OMA" id="RYSGLQW"/>
<dbReference type="OrthoDB" id="159299at2759"/>
<dbReference type="PAN-GO" id="Q5SRD1">
    <property type="GO annotations" value="4 GO annotations based on evolutionary models"/>
</dbReference>
<dbReference type="PhylomeDB" id="Q5SRD1"/>
<dbReference type="TreeFam" id="TF106196"/>
<dbReference type="PathwayCommons" id="Q5SRD1"/>
<dbReference type="SignaLink" id="Q5SRD1"/>
<dbReference type="BioGRID-ORCS" id="100652748">
    <property type="hits" value="16 hits in 186 CRISPR screens"/>
</dbReference>
<dbReference type="ChiTaRS" id="TIMM23B">
    <property type="organism name" value="human"/>
</dbReference>
<dbReference type="GenomeRNAi" id="100652748"/>
<dbReference type="Pharos" id="Q5SRD1">
    <property type="development level" value="Tdark"/>
</dbReference>
<dbReference type="PRO" id="PR:Q5SRD1"/>
<dbReference type="Proteomes" id="UP000005640">
    <property type="component" value="Chromosome 10"/>
</dbReference>
<dbReference type="RNAct" id="Q5SRD1">
    <property type="molecule type" value="protein"/>
</dbReference>
<dbReference type="Bgee" id="ENSG00000204152">
    <property type="expression patterns" value="Expressed in tibialis anterior and 180 other cell types or tissues"/>
</dbReference>
<dbReference type="ExpressionAtlas" id="Q5SRD1">
    <property type="expression patterns" value="baseline and differential"/>
</dbReference>
<dbReference type="GO" id="GO:0005739">
    <property type="term" value="C:mitochondrion"/>
    <property type="evidence" value="ECO:0006056"/>
    <property type="project" value="FlyBase"/>
</dbReference>
<dbReference type="GO" id="GO:0005744">
    <property type="term" value="C:TIM23 mitochondrial import inner membrane translocase complex"/>
    <property type="evidence" value="ECO:0000318"/>
    <property type="project" value="GO_Central"/>
</dbReference>
<dbReference type="GO" id="GO:0008320">
    <property type="term" value="F:protein transmembrane transporter activity"/>
    <property type="evidence" value="ECO:0000318"/>
    <property type="project" value="GO_Central"/>
</dbReference>
<dbReference type="GO" id="GO:0030150">
    <property type="term" value="P:protein import into mitochondrial matrix"/>
    <property type="evidence" value="ECO:0000318"/>
    <property type="project" value="GO_Central"/>
</dbReference>
<dbReference type="InterPro" id="IPR005681">
    <property type="entry name" value="Tim23"/>
</dbReference>
<dbReference type="InterPro" id="IPR045238">
    <property type="entry name" value="Tim23-like"/>
</dbReference>
<dbReference type="NCBIfam" id="TIGR00983">
    <property type="entry name" value="3a0801s02tim23"/>
    <property type="match status" value="1"/>
</dbReference>
<dbReference type="PANTHER" id="PTHR15371:SF34">
    <property type="entry name" value="MITOCHONDRIAL IMPORT INNER MEMBRANE TRANSLOCASE SUBUNIT TIM23B"/>
    <property type="match status" value="1"/>
</dbReference>
<dbReference type="PANTHER" id="PTHR15371">
    <property type="entry name" value="TIM23"/>
    <property type="match status" value="1"/>
</dbReference>
<dbReference type="Pfam" id="PF02466">
    <property type="entry name" value="Tim17"/>
    <property type="match status" value="1"/>
</dbReference>
<keyword id="KW-0025">Alternative splicing</keyword>
<keyword id="KW-0472">Membrane</keyword>
<keyword id="KW-0496">Mitochondrion</keyword>
<keyword id="KW-0999">Mitochondrion inner membrane</keyword>
<keyword id="KW-0653">Protein transport</keyword>
<keyword id="KW-1267">Proteomics identification</keyword>
<keyword id="KW-1185">Reference proteome</keyword>
<keyword id="KW-0811">Translocation</keyword>
<keyword id="KW-0812">Transmembrane</keyword>
<keyword id="KW-1133">Transmembrane helix</keyword>
<keyword id="KW-0813">Transport</keyword>
<feature type="chain" id="PRO_0000349114" description="Mitochondrial import inner membrane translocase subunit Tim23B">
    <location>
        <begin position="1"/>
        <end position="188"/>
    </location>
</feature>
<feature type="transmembrane region" description="Helical" evidence="2">
    <location>
        <begin position="73"/>
        <end position="93"/>
    </location>
</feature>
<feature type="transmembrane region" description="Helical" evidence="2">
    <location>
        <begin position="125"/>
        <end position="145"/>
    </location>
</feature>
<feature type="splice variant" id="VSP_060625" description="In isoform 2.">
    <location>
        <begin position="87"/>
        <end position="134"/>
    </location>
</feature>